<keyword id="KW-0028">Amino-acid biosynthesis</keyword>
<keyword id="KW-0170">Cobalt</keyword>
<keyword id="KW-0220">Diaminopimelate biosynthesis</keyword>
<keyword id="KW-0378">Hydrolase</keyword>
<keyword id="KW-0457">Lysine biosynthesis</keyword>
<keyword id="KW-0479">Metal-binding</keyword>
<keyword id="KW-1185">Reference proteome</keyword>
<keyword id="KW-0862">Zinc</keyword>
<comment type="function">
    <text evidence="1">Catalyzes the hydrolysis of N-succinyl-L,L-diaminopimelic acid (SDAP), forming succinate and LL-2,6-diaminopimelate (DAP), an intermediate involved in the bacterial biosynthesis of lysine and meso-diaminopimelic acid, an essential component of bacterial cell walls.</text>
</comment>
<comment type="catalytic activity">
    <reaction evidence="1">
        <text>N-succinyl-(2S,6S)-2,6-diaminopimelate + H2O = (2S,6S)-2,6-diaminopimelate + succinate</text>
        <dbReference type="Rhea" id="RHEA:22608"/>
        <dbReference type="ChEBI" id="CHEBI:15377"/>
        <dbReference type="ChEBI" id="CHEBI:30031"/>
        <dbReference type="ChEBI" id="CHEBI:57609"/>
        <dbReference type="ChEBI" id="CHEBI:58087"/>
        <dbReference type="EC" id="3.5.1.18"/>
    </reaction>
</comment>
<comment type="cofactor">
    <cofactor evidence="1">
        <name>Zn(2+)</name>
        <dbReference type="ChEBI" id="CHEBI:29105"/>
    </cofactor>
    <cofactor evidence="1">
        <name>Co(2+)</name>
        <dbReference type="ChEBI" id="CHEBI:48828"/>
    </cofactor>
    <text evidence="1">Binds 2 Zn(2+) or Co(2+) ions per subunit.</text>
</comment>
<comment type="pathway">
    <text evidence="1">Amino-acid biosynthesis; L-lysine biosynthesis via DAP pathway; LL-2,6-diaminopimelate from (S)-tetrahydrodipicolinate (succinylase route): step 3/3.</text>
</comment>
<comment type="subunit">
    <text evidence="1">Homodimer.</text>
</comment>
<comment type="similarity">
    <text evidence="1">Belongs to the peptidase M20A family. DapE subfamily.</text>
</comment>
<evidence type="ECO:0000255" key="1">
    <source>
        <dbReference type="HAMAP-Rule" id="MF_01690"/>
    </source>
</evidence>
<dbReference type="EC" id="3.5.1.18" evidence="1"/>
<dbReference type="EMBL" id="CP000462">
    <property type="protein sequence ID" value="ABK35841.1"/>
    <property type="molecule type" value="Genomic_DNA"/>
</dbReference>
<dbReference type="RefSeq" id="WP_011705377.1">
    <property type="nucleotide sequence ID" value="NC_008570.1"/>
</dbReference>
<dbReference type="RefSeq" id="YP_856016.1">
    <property type="nucleotide sequence ID" value="NC_008570.1"/>
</dbReference>
<dbReference type="SMR" id="A0KIB5"/>
<dbReference type="STRING" id="380703.AHA_1478"/>
<dbReference type="EnsemblBacteria" id="ABK35841">
    <property type="protein sequence ID" value="ABK35841"/>
    <property type="gene ID" value="AHA_1478"/>
</dbReference>
<dbReference type="GeneID" id="4488254"/>
<dbReference type="KEGG" id="aha:AHA_1478"/>
<dbReference type="PATRIC" id="fig|380703.7.peg.1487"/>
<dbReference type="eggNOG" id="COG0624">
    <property type="taxonomic scope" value="Bacteria"/>
</dbReference>
<dbReference type="HOGENOM" id="CLU_021802_4_0_6"/>
<dbReference type="OrthoDB" id="9809784at2"/>
<dbReference type="UniPathway" id="UPA00034">
    <property type="reaction ID" value="UER00021"/>
</dbReference>
<dbReference type="Proteomes" id="UP000000756">
    <property type="component" value="Chromosome"/>
</dbReference>
<dbReference type="GO" id="GO:0008777">
    <property type="term" value="F:acetylornithine deacetylase activity"/>
    <property type="evidence" value="ECO:0007669"/>
    <property type="project" value="TreeGrafter"/>
</dbReference>
<dbReference type="GO" id="GO:0050897">
    <property type="term" value="F:cobalt ion binding"/>
    <property type="evidence" value="ECO:0007669"/>
    <property type="project" value="UniProtKB-UniRule"/>
</dbReference>
<dbReference type="GO" id="GO:0009014">
    <property type="term" value="F:succinyl-diaminopimelate desuccinylase activity"/>
    <property type="evidence" value="ECO:0007669"/>
    <property type="project" value="UniProtKB-UniRule"/>
</dbReference>
<dbReference type="GO" id="GO:0008270">
    <property type="term" value="F:zinc ion binding"/>
    <property type="evidence" value="ECO:0007669"/>
    <property type="project" value="UniProtKB-UniRule"/>
</dbReference>
<dbReference type="GO" id="GO:0019877">
    <property type="term" value="P:diaminopimelate biosynthetic process"/>
    <property type="evidence" value="ECO:0007669"/>
    <property type="project" value="UniProtKB-UniRule"/>
</dbReference>
<dbReference type="GO" id="GO:0006526">
    <property type="term" value="P:L-arginine biosynthetic process"/>
    <property type="evidence" value="ECO:0007669"/>
    <property type="project" value="TreeGrafter"/>
</dbReference>
<dbReference type="GO" id="GO:0009089">
    <property type="term" value="P:lysine biosynthetic process via diaminopimelate"/>
    <property type="evidence" value="ECO:0007669"/>
    <property type="project" value="UniProtKB-UniRule"/>
</dbReference>
<dbReference type="CDD" id="cd03891">
    <property type="entry name" value="M20_DapE_proteobac"/>
    <property type="match status" value="1"/>
</dbReference>
<dbReference type="FunFam" id="3.30.70.360:FF:000011">
    <property type="entry name" value="Succinyl-diaminopimelate desuccinylase"/>
    <property type="match status" value="1"/>
</dbReference>
<dbReference type="FunFam" id="3.40.630.10:FF:000005">
    <property type="entry name" value="Succinyl-diaminopimelate desuccinylase"/>
    <property type="match status" value="1"/>
</dbReference>
<dbReference type="FunFam" id="3.40.630.10:FF:000010">
    <property type="entry name" value="Succinyl-diaminopimelate desuccinylase"/>
    <property type="match status" value="1"/>
</dbReference>
<dbReference type="Gene3D" id="3.40.630.10">
    <property type="entry name" value="Zn peptidases"/>
    <property type="match status" value="2"/>
</dbReference>
<dbReference type="HAMAP" id="MF_01690">
    <property type="entry name" value="DapE"/>
    <property type="match status" value="1"/>
</dbReference>
<dbReference type="InterPro" id="IPR001261">
    <property type="entry name" value="ArgE/DapE_CS"/>
</dbReference>
<dbReference type="InterPro" id="IPR036264">
    <property type="entry name" value="Bact_exopeptidase_dim_dom"/>
</dbReference>
<dbReference type="InterPro" id="IPR005941">
    <property type="entry name" value="DapE_proteobac"/>
</dbReference>
<dbReference type="InterPro" id="IPR002933">
    <property type="entry name" value="Peptidase_M20"/>
</dbReference>
<dbReference type="InterPro" id="IPR011650">
    <property type="entry name" value="Peptidase_M20_dimer"/>
</dbReference>
<dbReference type="InterPro" id="IPR050072">
    <property type="entry name" value="Peptidase_M20A"/>
</dbReference>
<dbReference type="NCBIfam" id="TIGR01246">
    <property type="entry name" value="dapE_proteo"/>
    <property type="match status" value="1"/>
</dbReference>
<dbReference type="NCBIfam" id="NF009557">
    <property type="entry name" value="PRK13009.1"/>
    <property type="match status" value="1"/>
</dbReference>
<dbReference type="PANTHER" id="PTHR43808">
    <property type="entry name" value="ACETYLORNITHINE DEACETYLASE"/>
    <property type="match status" value="1"/>
</dbReference>
<dbReference type="PANTHER" id="PTHR43808:SF31">
    <property type="entry name" value="N-ACETYL-L-CITRULLINE DEACETYLASE"/>
    <property type="match status" value="1"/>
</dbReference>
<dbReference type="Pfam" id="PF07687">
    <property type="entry name" value="M20_dimer"/>
    <property type="match status" value="1"/>
</dbReference>
<dbReference type="Pfam" id="PF01546">
    <property type="entry name" value="Peptidase_M20"/>
    <property type="match status" value="1"/>
</dbReference>
<dbReference type="SUPFAM" id="SSF55031">
    <property type="entry name" value="Bacterial exopeptidase dimerisation domain"/>
    <property type="match status" value="1"/>
</dbReference>
<dbReference type="SUPFAM" id="SSF53187">
    <property type="entry name" value="Zn-dependent exopeptidases"/>
    <property type="match status" value="1"/>
</dbReference>
<dbReference type="PROSITE" id="PS00759">
    <property type="entry name" value="ARGE_DAPE_CPG2_2"/>
    <property type="match status" value="1"/>
</dbReference>
<protein>
    <recommendedName>
        <fullName evidence="1">Succinyl-diaminopimelate desuccinylase</fullName>
        <shortName evidence="1">SDAP desuccinylase</shortName>
        <ecNumber evidence="1">3.5.1.18</ecNumber>
    </recommendedName>
    <alternativeName>
        <fullName evidence="1">N-succinyl-LL-2,6-diaminoheptanedioate amidohydrolase</fullName>
    </alternativeName>
</protein>
<name>DAPE_AERHH</name>
<feature type="chain" id="PRO_0000375453" description="Succinyl-diaminopimelate desuccinylase">
    <location>
        <begin position="1"/>
        <end position="375"/>
    </location>
</feature>
<feature type="active site" evidence="1">
    <location>
        <position position="68"/>
    </location>
</feature>
<feature type="active site" description="Proton acceptor" evidence="1">
    <location>
        <position position="133"/>
    </location>
</feature>
<feature type="binding site" evidence="1">
    <location>
        <position position="66"/>
    </location>
    <ligand>
        <name>Zn(2+)</name>
        <dbReference type="ChEBI" id="CHEBI:29105"/>
        <label>1</label>
    </ligand>
</feature>
<feature type="binding site" evidence="1">
    <location>
        <position position="99"/>
    </location>
    <ligand>
        <name>Zn(2+)</name>
        <dbReference type="ChEBI" id="CHEBI:29105"/>
        <label>1</label>
    </ligand>
</feature>
<feature type="binding site" evidence="1">
    <location>
        <position position="99"/>
    </location>
    <ligand>
        <name>Zn(2+)</name>
        <dbReference type="ChEBI" id="CHEBI:29105"/>
        <label>2</label>
    </ligand>
</feature>
<feature type="binding site" evidence="1">
    <location>
        <position position="134"/>
    </location>
    <ligand>
        <name>Zn(2+)</name>
        <dbReference type="ChEBI" id="CHEBI:29105"/>
        <label>2</label>
    </ligand>
</feature>
<feature type="binding site" evidence="1">
    <location>
        <position position="162"/>
    </location>
    <ligand>
        <name>Zn(2+)</name>
        <dbReference type="ChEBI" id="CHEBI:29105"/>
        <label>1</label>
    </ligand>
</feature>
<feature type="binding site" evidence="1">
    <location>
        <position position="348"/>
    </location>
    <ligand>
        <name>Zn(2+)</name>
        <dbReference type="ChEBI" id="CHEBI:29105"/>
        <label>2</label>
    </ligand>
</feature>
<organism>
    <name type="scientific">Aeromonas hydrophila subsp. hydrophila (strain ATCC 7966 / DSM 30187 / BCRC 13018 / CCUG 14551 / JCM 1027 / KCTC 2358 / NCIMB 9240 / NCTC 8049)</name>
    <dbReference type="NCBI Taxonomy" id="380703"/>
    <lineage>
        <taxon>Bacteria</taxon>
        <taxon>Pseudomonadati</taxon>
        <taxon>Pseudomonadota</taxon>
        <taxon>Gammaproteobacteria</taxon>
        <taxon>Aeromonadales</taxon>
        <taxon>Aeromonadaceae</taxon>
        <taxon>Aeromonas</taxon>
    </lineage>
</organism>
<gene>
    <name evidence="1" type="primary">dapE</name>
    <name type="ordered locus">AHA_1478</name>
</gene>
<accession>A0KIB5</accession>
<reference key="1">
    <citation type="journal article" date="2006" name="J. Bacteriol.">
        <title>Genome sequence of Aeromonas hydrophila ATCC 7966T: jack of all trades.</title>
        <authorList>
            <person name="Seshadri R."/>
            <person name="Joseph S.W."/>
            <person name="Chopra A.K."/>
            <person name="Sha J."/>
            <person name="Shaw J."/>
            <person name="Graf J."/>
            <person name="Haft D.H."/>
            <person name="Wu M."/>
            <person name="Ren Q."/>
            <person name="Rosovitz M.J."/>
            <person name="Madupu R."/>
            <person name="Tallon L."/>
            <person name="Kim M."/>
            <person name="Jin S."/>
            <person name="Vuong H."/>
            <person name="Stine O.C."/>
            <person name="Ali A."/>
            <person name="Horneman A.J."/>
            <person name="Heidelberg J.F."/>
        </authorList>
    </citation>
    <scope>NUCLEOTIDE SEQUENCE [LARGE SCALE GENOMIC DNA]</scope>
    <source>
        <strain>ATCC 7966 / DSM 30187 / BCRC 13018 / CCUG 14551 / JCM 1027 / KCTC 2358 / NCIMB 9240 / NCTC 8049</strain>
    </source>
</reference>
<sequence>MSDVIALAKDLIRRPSVTPLDEGCQTLMAERLAKLGFVIEPMVFEDTTNLWARRGSEGPLFCFAGHTDVVPAGPLDKWHTPPFEPTIQDGVLYGRGAADMKGSLAAMVVAVERFVAEHPDHSGSIAFLITSDEEGPFINGTTRVIDTLEARHEKITWCIVGEPSSTTVVGDVVKNGRRGSITGDLLVRGVQGHVAYPHLADNPIHKAAPALAELAATVWDEGNAYFPPTSFQIANISAGTGASNVIPGELHVQFNFRFSTELTDLDIRERVEALLDRHGLDYQLDWTLSGQPFLTDTGKLLAAAVSAIEAVNGQQPALLTTGGTSDGRFIAPTGAEVIELGPVNATIHKVNECVKADDLDLLADMYQGVLARLLA</sequence>
<proteinExistence type="inferred from homology"/>